<proteinExistence type="predicted"/>
<name>YVDH_STRFR</name>
<feature type="chain" id="PRO_0000066545" description="Uncharacterized 32.3 kDa protein in vdh 3'region">
    <location>
        <begin position="1"/>
        <end position="284"/>
    </location>
</feature>
<evidence type="ECO:0000305" key="1"/>
<reference key="1">
    <citation type="journal article" date="1994" name="J. Bacteriol.">
        <title>Amino acid catabolism and antibiotic synthesis: valine is a source of precursors for macrolide biosynthesis in Streptomyces ambofaciens and Streptomyces fradiae.</title>
        <authorList>
            <person name="Tang L."/>
            <person name="Zhang Y.X."/>
            <person name="Hutchinson C.R."/>
        </authorList>
    </citation>
    <scope>NUCLEOTIDE SEQUENCE [GENOMIC DNA]</scope>
    <source>
        <strain>C373.1</strain>
    </source>
</reference>
<organism>
    <name type="scientific">Streptomyces fradiae</name>
    <name type="common">Streptomyces roseoflavus</name>
    <dbReference type="NCBI Taxonomy" id="1906"/>
    <lineage>
        <taxon>Bacteria</taxon>
        <taxon>Bacillati</taxon>
        <taxon>Actinomycetota</taxon>
        <taxon>Actinomycetes</taxon>
        <taxon>Kitasatosporales</taxon>
        <taxon>Streptomycetaceae</taxon>
        <taxon>Streptomyces</taxon>
    </lineage>
</organism>
<accession>P40177</accession>
<dbReference type="EMBL" id="L33872">
    <property type="protein sequence ID" value="AAA62387.1"/>
    <property type="status" value="ALT_INIT"/>
    <property type="molecule type" value="Genomic_DNA"/>
</dbReference>
<dbReference type="RefSeq" id="WP_043463555.1">
    <property type="nucleotide sequence ID" value="NZ_LGSP01000010.1"/>
</dbReference>
<dbReference type="STRING" id="1906.SFRA_10715"/>
<dbReference type="eggNOG" id="ENOG5032IA4">
    <property type="taxonomic scope" value="Bacteria"/>
</dbReference>
<comment type="sequence caution" evidence="1">
    <conflict type="erroneous initiation">
        <sequence resource="EMBL-CDS" id="AAA62387"/>
    </conflict>
</comment>
<sequence length="284" mass="32317">MGLASSLFVPYAAYLRVYEPLAAFPEPERSHWYRYAGRADPPTAQDELRRSLVDLLPTPPVAVPVHESGDAFVAVVDGVTCVCPWRTRLRGWEALEALPELLPAPVLDAALPQVVRRQAADDHERWRERNPDARPWIRTATWHVPVRWFALFTAGEREYVQRSGEGEKAERPVLRYRTPMVEARRRVARGLRVLREALNESPLIDGLEDVGRWLEEFHPRSLVELDYGGLVHALTDDWLAGDRSAADVTEGLEALRAGDGVRAGEVYQRLVERWRAVREREFAS</sequence>
<protein>
    <recommendedName>
        <fullName>Uncharacterized 32.3 kDa protein in vdh 3'region</fullName>
    </recommendedName>
    <alternativeName>
        <fullName>ORF1</fullName>
    </alternativeName>
</protein>